<feature type="chain" id="PRO_0000194652" description="Photosystem I reaction center subunit VIII">
    <location>
        <begin position="1"/>
        <end position="35"/>
    </location>
</feature>
<feature type="transmembrane region" description="Helical" evidence="2">
    <location>
        <begin position="8"/>
        <end position="28"/>
    </location>
</feature>
<feature type="helix" evidence="4">
    <location>
        <begin position="5"/>
        <end position="9"/>
    </location>
</feature>
<feature type="turn" evidence="4">
    <location>
        <begin position="10"/>
        <end position="15"/>
    </location>
</feature>
<feature type="helix" evidence="4">
    <location>
        <begin position="16"/>
        <end position="29"/>
    </location>
</feature>
<proteinExistence type="evidence at protein level"/>
<geneLocation type="cyanelle"/>
<dbReference type="EMBL" id="U30821">
    <property type="protein sequence ID" value="AAA81213.1"/>
    <property type="molecule type" value="Genomic_DNA"/>
</dbReference>
<dbReference type="PIR" id="T06870">
    <property type="entry name" value="T06870"/>
</dbReference>
<dbReference type="RefSeq" id="NP_043182.1">
    <property type="nucleotide sequence ID" value="NC_001675.1"/>
</dbReference>
<dbReference type="PDB" id="7DR0">
    <property type="method" value="EM"/>
    <property type="resolution" value="3.30 A"/>
    <property type="chains" value="I=1-35"/>
</dbReference>
<dbReference type="PDB" id="7DR1">
    <property type="method" value="EM"/>
    <property type="resolution" value="3.20 A"/>
    <property type="chains" value="I=1-35"/>
</dbReference>
<dbReference type="PDB" id="7DR2">
    <property type="method" value="EM"/>
    <property type="resolution" value="3.80 A"/>
    <property type="chains" value="aI/bI/cI/dI=1-35"/>
</dbReference>
<dbReference type="PDBsum" id="7DR0"/>
<dbReference type="PDBsum" id="7DR1"/>
<dbReference type="PDBsum" id="7DR2"/>
<dbReference type="EMDB" id="EMD-30820"/>
<dbReference type="EMDB" id="EMD-30821"/>
<dbReference type="EMDB" id="EMD-30823"/>
<dbReference type="SMR" id="P48116"/>
<dbReference type="GeneID" id="801688"/>
<dbReference type="GO" id="GO:0033115">
    <property type="term" value="C:cyanelle thylakoid membrane"/>
    <property type="evidence" value="ECO:0007669"/>
    <property type="project" value="UniProtKB-SubCell"/>
</dbReference>
<dbReference type="GO" id="GO:0009522">
    <property type="term" value="C:photosystem I"/>
    <property type="evidence" value="ECO:0007669"/>
    <property type="project" value="UniProtKB-KW"/>
</dbReference>
<dbReference type="GO" id="GO:0015979">
    <property type="term" value="P:photosynthesis"/>
    <property type="evidence" value="ECO:0007669"/>
    <property type="project" value="UniProtKB-UniRule"/>
</dbReference>
<dbReference type="HAMAP" id="MF_00431">
    <property type="entry name" value="PSI_PsaI"/>
    <property type="match status" value="1"/>
</dbReference>
<dbReference type="InterPro" id="IPR001302">
    <property type="entry name" value="PSI_PsaI"/>
</dbReference>
<dbReference type="InterPro" id="IPR036357">
    <property type="entry name" value="PSI_PsaI_sf"/>
</dbReference>
<dbReference type="NCBIfam" id="NF008830">
    <property type="entry name" value="PRK11877.1"/>
    <property type="match status" value="1"/>
</dbReference>
<dbReference type="NCBIfam" id="TIGR03052">
    <property type="entry name" value="PS_I_psaI"/>
    <property type="match status" value="1"/>
</dbReference>
<dbReference type="PANTHER" id="PTHR35775">
    <property type="match status" value="1"/>
</dbReference>
<dbReference type="PANTHER" id="PTHR35775:SF2">
    <property type="entry name" value="PHOTOSYSTEM I REACTION CENTER SUBUNIT VIII"/>
    <property type="match status" value="1"/>
</dbReference>
<dbReference type="Pfam" id="PF00796">
    <property type="entry name" value="PSI_8"/>
    <property type="match status" value="1"/>
</dbReference>
<dbReference type="SUPFAM" id="SSF81540">
    <property type="entry name" value="Subunit VIII of photosystem I reaction centre, PsaI"/>
    <property type="match status" value="1"/>
</dbReference>
<name>PSAI_CYAPA</name>
<comment type="function">
    <text evidence="1">May help in the organization of the PsaL subunit.</text>
</comment>
<comment type="subcellular location">
    <subcellularLocation>
        <location evidence="1">Plastid</location>
        <location evidence="1">Cyanelle thylakoid membrane</location>
        <topology evidence="1">Single-pass membrane protein</topology>
    </subcellularLocation>
</comment>
<comment type="similarity">
    <text evidence="3">Belongs to the PsaI family.</text>
</comment>
<sequence length="35" mass="3773">MVSNLPSILVPMVGIVLPAIVMALLFVYIETDEIA</sequence>
<keyword id="KW-0002">3D-structure</keyword>
<keyword id="KW-0194">Cyanelle</keyword>
<keyword id="KW-0472">Membrane</keyword>
<keyword id="KW-0602">Photosynthesis</keyword>
<keyword id="KW-0603">Photosystem I</keyword>
<keyword id="KW-0934">Plastid</keyword>
<keyword id="KW-0793">Thylakoid</keyword>
<keyword id="KW-0812">Transmembrane</keyword>
<keyword id="KW-1133">Transmembrane helix</keyword>
<evidence type="ECO:0000250" key="1"/>
<evidence type="ECO:0000255" key="2"/>
<evidence type="ECO:0000305" key="3"/>
<evidence type="ECO:0007829" key="4">
    <source>
        <dbReference type="PDB" id="7DR1"/>
    </source>
</evidence>
<protein>
    <recommendedName>
        <fullName>Photosystem I reaction center subunit VIII</fullName>
        <shortName>PSI-I</shortName>
    </recommendedName>
</protein>
<organism>
    <name type="scientific">Cyanophora paradoxa</name>
    <dbReference type="NCBI Taxonomy" id="2762"/>
    <lineage>
        <taxon>Eukaryota</taxon>
        <taxon>Glaucocystophyceae</taxon>
        <taxon>Cyanophoraceae</taxon>
        <taxon>Cyanophora</taxon>
    </lineage>
</organism>
<gene>
    <name type="primary">psaI</name>
</gene>
<reference key="1">
    <citation type="journal article" date="1995" name="Plant Mol. Biol. Rep.">
        <title>Nucleotide sequence of the cyanelle DNA from Cyanophora paradoxa.</title>
        <authorList>
            <person name="Stirewalt V.L."/>
            <person name="Michalowski C.B."/>
            <person name="Loeffelhardt W."/>
            <person name="Bohnert H.J."/>
            <person name="Bryant D.A."/>
        </authorList>
    </citation>
    <scope>NUCLEOTIDE SEQUENCE [LARGE SCALE GENOMIC DNA]</scope>
    <source>
        <strain>UTEX LB 555 / Pringsheim</strain>
    </source>
</reference>
<reference key="2">
    <citation type="book" date="1997" name="Eukaryotism and symbiosis">
        <title>The complete sequence of the cyanelle genome of Cyanophora paradoxa: the genetic complexity of a primitive plastid.</title>
        <editorList>
            <person name="Schenk H.E.A."/>
            <person name="Herrmann R."/>
            <person name="Jeon K.W."/>
            <person name="Mueller N.E."/>
            <person name="Schwemmler W."/>
        </editorList>
        <authorList>
            <person name="Loeffelhardt W."/>
            <person name="Stirewalt V.L."/>
            <person name="Michalowski C.B."/>
            <person name="Annarella M."/>
            <person name="Farley J.Y."/>
            <person name="Schluchter W.M."/>
            <person name="Chung S."/>
            <person name="Newmann-Spallart C."/>
            <person name="Steiner J.M."/>
            <person name="Jakowitsch J."/>
            <person name="Bohnert H.J."/>
            <person name="Bryant D.A."/>
        </authorList>
    </citation>
    <scope>NUCLEOTIDE SEQUENCE [LARGE SCALE GENOMIC DNA]</scope>
    <source>
        <strain>UTEX LB 555 / Pringsheim</strain>
    </source>
</reference>
<accession>P48116</accession>